<organism>
    <name type="scientific">Sulfurisphaera tokodaii (strain DSM 16993 / JCM 10545 / NBRC 100140 / 7)</name>
    <name type="common">Sulfolobus tokodaii</name>
    <dbReference type="NCBI Taxonomy" id="273063"/>
    <lineage>
        <taxon>Archaea</taxon>
        <taxon>Thermoproteota</taxon>
        <taxon>Thermoprotei</taxon>
        <taxon>Sulfolobales</taxon>
        <taxon>Sulfolobaceae</taxon>
        <taxon>Sulfurisphaera</taxon>
    </lineage>
</organism>
<gene>
    <name evidence="1" type="primary">atpD</name>
    <name type="synonym">atpG</name>
    <name type="ordered locus">STK_14380</name>
</gene>
<accession>P62017</accession>
<accession>F9VNC8</accession>
<accession>P22721</accession>
<accession>P62016</accession>
<protein>
    <recommendedName>
        <fullName evidence="1">A-type ATP synthase subunit D</fullName>
    </recommendedName>
</protein>
<comment type="function">
    <text evidence="1">Component of the A-type ATP synthase that produces ATP from ADP in the presence of a proton gradient across the membrane.</text>
</comment>
<comment type="subunit">
    <text evidence="1">Has multiple subunits with at least A(3), B(3), C, D, E, F, H, I and proteolipid K(x).</text>
</comment>
<comment type="subcellular location">
    <subcellularLocation>
        <location evidence="1">Cell membrane</location>
        <topology evidence="1">Peripheral membrane protein</topology>
    </subcellularLocation>
</comment>
<comment type="PTM">
    <text>The N-terminus is blocked.</text>
</comment>
<comment type="similarity">
    <text evidence="1">Belongs to the V-ATPase D subunit family.</text>
</comment>
<comment type="caution">
    <text evidence="2">Was originally reported as originating from S.acidocaldarius.</text>
</comment>
<name>AATD_SULTO</name>
<feature type="chain" id="PRO_0000144260" description="A-type ATP synthase subunit D">
    <location>
        <begin position="1"/>
        <end position="216"/>
    </location>
</feature>
<reference key="1">
    <citation type="journal article" date="1990" name="J. Biol. Chem.">
        <title>Structure of an ATPase operon of an acidothermophilic archaebacterium, Sulfolobus acidocaldarius.</title>
        <authorList>
            <person name="Denda K."/>
            <person name="Konishi J."/>
            <person name="Hajiro K."/>
            <person name="Oshima T."/>
            <person name="Date T."/>
            <person name="Yoshida M."/>
        </authorList>
    </citation>
    <scope>NUCLEOTIDE SEQUENCE [GENOMIC DNA]</scope>
    <scope>PROTEIN SEQUENCE OF 201-210</scope>
</reference>
<reference key="2">
    <citation type="journal article" date="2001" name="DNA Res.">
        <title>Complete genome sequence of an aerobic thermoacidophilic Crenarchaeon, Sulfolobus tokodaii strain7.</title>
        <authorList>
            <person name="Kawarabayasi Y."/>
            <person name="Hino Y."/>
            <person name="Horikawa H."/>
            <person name="Jin-no K."/>
            <person name="Takahashi M."/>
            <person name="Sekine M."/>
            <person name="Baba S."/>
            <person name="Ankai A."/>
            <person name="Kosugi H."/>
            <person name="Hosoyama A."/>
            <person name="Fukui S."/>
            <person name="Nagai Y."/>
            <person name="Nishijima K."/>
            <person name="Otsuka R."/>
            <person name="Nakazawa H."/>
            <person name="Takamiya M."/>
            <person name="Kato Y."/>
            <person name="Yoshizawa T."/>
            <person name="Tanaka T."/>
            <person name="Kudoh Y."/>
            <person name="Yamazaki J."/>
            <person name="Kushida N."/>
            <person name="Oguchi A."/>
            <person name="Aoki K."/>
            <person name="Masuda S."/>
            <person name="Yanagii M."/>
            <person name="Nishimura M."/>
            <person name="Yamagishi A."/>
            <person name="Oshima T."/>
            <person name="Kikuchi H."/>
        </authorList>
    </citation>
    <scope>NUCLEOTIDE SEQUENCE [LARGE SCALE GENOMIC DNA]</scope>
    <source>
        <strain>DSM 16993 / JCM 10545 / NBRC 100140 / 7</strain>
    </source>
</reference>
<sequence>MSSRKILPTKLNLINLRKQIRLTRTIKRLLENKREVLLIYLREYANEYEKLYSEVSQLLKEVYETYLMGVSAEGISTVESYANSVPPSLQVKSDLKVLFGVRIPIVKLDENSIQPQPFGDIEVSPYITKSRDAIAEAFKKILELVEMESAIRSLSTELRKTQRLINAIDSYILPYYTSSAKYIKGVLDDRTREEFVRLKMIRKVLQRRRGENVGNR</sequence>
<proteinExistence type="evidence at protein level"/>
<dbReference type="EMBL" id="M57238">
    <property type="protein sequence ID" value="AAA72941.1"/>
    <property type="status" value="ALT_TERM"/>
    <property type="molecule type" value="Genomic_DNA"/>
</dbReference>
<dbReference type="EMBL" id="BA000023">
    <property type="protein sequence ID" value="BAK54574.1"/>
    <property type="molecule type" value="Genomic_DNA"/>
</dbReference>
<dbReference type="PIR" id="B36493">
    <property type="entry name" value="B36493"/>
</dbReference>
<dbReference type="RefSeq" id="WP_010979483.1">
    <property type="nucleotide sequence ID" value="NC_003106.2"/>
</dbReference>
<dbReference type="SMR" id="P62017"/>
<dbReference type="STRING" id="273063.STK_14380"/>
<dbReference type="GeneID" id="1459469"/>
<dbReference type="KEGG" id="sto:STK_14380"/>
<dbReference type="PATRIC" id="fig|273063.9.peg.1638"/>
<dbReference type="eggNOG" id="arCOG04101">
    <property type="taxonomic scope" value="Archaea"/>
</dbReference>
<dbReference type="OrthoDB" id="117390at2157"/>
<dbReference type="Proteomes" id="UP000001015">
    <property type="component" value="Chromosome"/>
</dbReference>
<dbReference type="GO" id="GO:0005886">
    <property type="term" value="C:plasma membrane"/>
    <property type="evidence" value="ECO:0007669"/>
    <property type="project" value="UniProtKB-SubCell"/>
</dbReference>
<dbReference type="GO" id="GO:0005524">
    <property type="term" value="F:ATP binding"/>
    <property type="evidence" value="ECO:0007669"/>
    <property type="project" value="UniProtKB-UniRule"/>
</dbReference>
<dbReference type="GO" id="GO:0046933">
    <property type="term" value="F:proton-transporting ATP synthase activity, rotational mechanism"/>
    <property type="evidence" value="ECO:0007669"/>
    <property type="project" value="UniProtKB-UniRule"/>
</dbReference>
<dbReference type="GO" id="GO:0046961">
    <property type="term" value="F:proton-transporting ATPase activity, rotational mechanism"/>
    <property type="evidence" value="ECO:0007669"/>
    <property type="project" value="InterPro"/>
</dbReference>
<dbReference type="GO" id="GO:0042777">
    <property type="term" value="P:proton motive force-driven plasma membrane ATP synthesis"/>
    <property type="evidence" value="ECO:0007669"/>
    <property type="project" value="UniProtKB-UniRule"/>
</dbReference>
<dbReference type="Gene3D" id="1.10.287.3240">
    <property type="match status" value="1"/>
</dbReference>
<dbReference type="HAMAP" id="MF_00271">
    <property type="entry name" value="ATP_synth_D_arch"/>
    <property type="match status" value="1"/>
</dbReference>
<dbReference type="InterPro" id="IPR002699">
    <property type="entry name" value="V_ATPase_D"/>
</dbReference>
<dbReference type="NCBIfam" id="NF001544">
    <property type="entry name" value="PRK00373.1-3"/>
    <property type="match status" value="1"/>
</dbReference>
<dbReference type="NCBIfam" id="TIGR00309">
    <property type="entry name" value="V_ATPase_subD"/>
    <property type="match status" value="1"/>
</dbReference>
<dbReference type="PANTHER" id="PTHR11671">
    <property type="entry name" value="V-TYPE ATP SYNTHASE SUBUNIT D"/>
    <property type="match status" value="1"/>
</dbReference>
<dbReference type="Pfam" id="PF01813">
    <property type="entry name" value="ATP-synt_D"/>
    <property type="match status" value="1"/>
</dbReference>
<evidence type="ECO:0000255" key="1">
    <source>
        <dbReference type="HAMAP-Rule" id="MF_00271"/>
    </source>
</evidence>
<evidence type="ECO:0000305" key="2">
    <source>
    </source>
</evidence>
<keyword id="KW-0066">ATP synthesis</keyword>
<keyword id="KW-1003">Cell membrane</keyword>
<keyword id="KW-0903">Direct protein sequencing</keyword>
<keyword id="KW-0375">Hydrogen ion transport</keyword>
<keyword id="KW-0406">Ion transport</keyword>
<keyword id="KW-0472">Membrane</keyword>
<keyword id="KW-1185">Reference proteome</keyword>
<keyword id="KW-0813">Transport</keyword>